<reference key="1">
    <citation type="journal article" date="2001" name="Lancet">
        <title>Whole genome sequencing of meticillin-resistant Staphylococcus aureus.</title>
        <authorList>
            <person name="Kuroda M."/>
            <person name="Ohta T."/>
            <person name="Uchiyama I."/>
            <person name="Baba T."/>
            <person name="Yuzawa H."/>
            <person name="Kobayashi I."/>
            <person name="Cui L."/>
            <person name="Oguchi A."/>
            <person name="Aoki K."/>
            <person name="Nagai Y."/>
            <person name="Lian J.-Q."/>
            <person name="Ito T."/>
            <person name="Kanamori M."/>
            <person name="Matsumaru H."/>
            <person name="Maruyama A."/>
            <person name="Murakami H."/>
            <person name="Hosoyama A."/>
            <person name="Mizutani-Ui Y."/>
            <person name="Takahashi N.K."/>
            <person name="Sawano T."/>
            <person name="Inoue R."/>
            <person name="Kaito C."/>
            <person name="Sekimizu K."/>
            <person name="Hirakawa H."/>
            <person name="Kuhara S."/>
            <person name="Goto S."/>
            <person name="Yabuzaki J."/>
            <person name="Kanehisa M."/>
            <person name="Yamashita A."/>
            <person name="Oshima K."/>
            <person name="Furuya K."/>
            <person name="Yoshino C."/>
            <person name="Shiba T."/>
            <person name="Hattori M."/>
            <person name="Ogasawara N."/>
            <person name="Hayashi H."/>
            <person name="Hiramatsu K."/>
        </authorList>
    </citation>
    <scope>NUCLEOTIDE SEQUENCE [LARGE SCALE GENOMIC DNA]</scope>
    <source>
        <strain>N315</strain>
    </source>
</reference>
<reference key="2">
    <citation type="journal article" date="2005" name="J. Microbiol. Methods">
        <title>Correlation of proteomic and transcriptomic profiles of Staphylococcus aureus during the post-exponential phase of growth.</title>
        <authorList>
            <person name="Scherl A."/>
            <person name="Francois P."/>
            <person name="Bento M."/>
            <person name="Deshusses J.M."/>
            <person name="Charbonnier Y."/>
            <person name="Converset V."/>
            <person name="Huyghe A."/>
            <person name="Walter N."/>
            <person name="Hoogland C."/>
            <person name="Appel R.D."/>
            <person name="Sanchez J.-C."/>
            <person name="Zimmermann-Ivol C.G."/>
            <person name="Corthals G.L."/>
            <person name="Hochstrasser D.F."/>
            <person name="Schrenzel J."/>
        </authorList>
    </citation>
    <scope>IDENTIFICATION BY MASS SPECTROMETRY</scope>
    <source>
        <strain>N315</strain>
    </source>
</reference>
<reference key="3">
    <citation type="submission" date="2007-10" db="UniProtKB">
        <title>Shotgun proteomic analysis of total and membrane protein extracts of S. aureus strain N315.</title>
        <authorList>
            <person name="Vaezzadeh A.R."/>
            <person name="Deshusses J."/>
            <person name="Lescuyer P."/>
            <person name="Hochstrasser D.F."/>
        </authorList>
    </citation>
    <scope>IDENTIFICATION BY MASS SPECTROMETRY [LARGE SCALE ANALYSIS]</scope>
    <source>
        <strain>N315</strain>
    </source>
</reference>
<protein>
    <recommendedName>
        <fullName evidence="1">Triosephosphate isomerase</fullName>
        <shortName evidence="1">TIM</shortName>
        <shortName evidence="1">TPI</shortName>
        <ecNumber evidence="1">5.3.1.1</ecNumber>
    </recommendedName>
    <alternativeName>
        <fullName evidence="1">Triose-phosphate isomerase</fullName>
    </alternativeName>
</protein>
<accession>P99133</accession>
<accession>Q9Z5C3</accession>
<sequence length="253" mass="27262">MRTPIIAGNWKMNKTVQEAKDFVNALPTLPDSKEVESVICAPAIQLDALTTAVKEGKAQGLEIGAQNTYFEDNGAFTGETSPVALADLGVKYVVIGHSERRELFHETDEEINKKAHAIFKHGMTPIICVGETDEERESGKANDVVGEQVKKAVAGLSEDQLKSVVIAYEPIWAIGTGKSSTSEDANEMCAFVRQTIADLSSKEVSEATRIQYGGSVKPNNIKEYMAQTDIDGALVGGASLKVEDFVQLLEGAK</sequence>
<organism>
    <name type="scientific">Staphylococcus aureus (strain N315)</name>
    <dbReference type="NCBI Taxonomy" id="158879"/>
    <lineage>
        <taxon>Bacteria</taxon>
        <taxon>Bacillati</taxon>
        <taxon>Bacillota</taxon>
        <taxon>Bacilli</taxon>
        <taxon>Bacillales</taxon>
        <taxon>Staphylococcaceae</taxon>
        <taxon>Staphylococcus</taxon>
    </lineage>
</organism>
<evidence type="ECO:0000255" key="1">
    <source>
        <dbReference type="HAMAP-Rule" id="MF_00147"/>
    </source>
</evidence>
<feature type="chain" id="PRO_0000090285" description="Triosephosphate isomerase">
    <location>
        <begin position="1"/>
        <end position="253"/>
    </location>
</feature>
<feature type="active site" description="Electrophile" evidence="1">
    <location>
        <position position="97"/>
    </location>
</feature>
<feature type="active site" description="Proton acceptor" evidence="1">
    <location>
        <position position="169"/>
    </location>
</feature>
<feature type="binding site" evidence="1">
    <location>
        <begin position="9"/>
        <end position="11"/>
    </location>
    <ligand>
        <name>substrate</name>
    </ligand>
</feature>
<feature type="binding site" evidence="1">
    <location>
        <position position="175"/>
    </location>
    <ligand>
        <name>substrate</name>
    </ligand>
</feature>
<feature type="binding site" evidence="1">
    <location>
        <position position="215"/>
    </location>
    <ligand>
        <name>substrate</name>
    </ligand>
</feature>
<feature type="binding site" evidence="1">
    <location>
        <begin position="236"/>
        <end position="237"/>
    </location>
    <ligand>
        <name>substrate</name>
    </ligand>
</feature>
<gene>
    <name evidence="1" type="primary">tpiA</name>
    <name type="synonym">tpi</name>
    <name type="ordered locus">SA0729</name>
</gene>
<keyword id="KW-0963">Cytoplasm</keyword>
<keyword id="KW-0312">Gluconeogenesis</keyword>
<keyword id="KW-0324">Glycolysis</keyword>
<keyword id="KW-0413">Isomerase</keyword>
<comment type="function">
    <text evidence="1">Involved in the gluconeogenesis. Catalyzes stereospecifically the conversion of dihydroxyacetone phosphate (DHAP) to D-glyceraldehyde-3-phosphate (G3P).</text>
</comment>
<comment type="catalytic activity">
    <reaction evidence="1">
        <text>D-glyceraldehyde 3-phosphate = dihydroxyacetone phosphate</text>
        <dbReference type="Rhea" id="RHEA:18585"/>
        <dbReference type="ChEBI" id="CHEBI:57642"/>
        <dbReference type="ChEBI" id="CHEBI:59776"/>
        <dbReference type="EC" id="5.3.1.1"/>
    </reaction>
</comment>
<comment type="pathway">
    <text evidence="1">Carbohydrate biosynthesis; gluconeogenesis.</text>
</comment>
<comment type="pathway">
    <text evidence="1">Carbohydrate degradation; glycolysis; D-glyceraldehyde 3-phosphate from glycerone phosphate: step 1/1.</text>
</comment>
<comment type="subunit">
    <text evidence="1">Homodimer.</text>
</comment>
<comment type="subcellular location">
    <subcellularLocation>
        <location evidence="1">Cytoplasm</location>
    </subcellularLocation>
</comment>
<comment type="similarity">
    <text evidence="1">Belongs to the triosephosphate isomerase family.</text>
</comment>
<dbReference type="EC" id="5.3.1.1" evidence="1"/>
<dbReference type="EMBL" id="BA000018">
    <property type="protein sequence ID" value="BAB41962.1"/>
    <property type="molecule type" value="Genomic_DNA"/>
</dbReference>
<dbReference type="PIR" id="G89850">
    <property type="entry name" value="G89850"/>
</dbReference>
<dbReference type="RefSeq" id="WP_001260089.1">
    <property type="nucleotide sequence ID" value="NC_002745.2"/>
</dbReference>
<dbReference type="SMR" id="P99133"/>
<dbReference type="EnsemblBacteria" id="BAB41962">
    <property type="protein sequence ID" value="BAB41962"/>
    <property type="gene ID" value="BAB41962"/>
</dbReference>
<dbReference type="KEGG" id="sau:SA0729"/>
<dbReference type="HOGENOM" id="CLU_024251_2_3_9"/>
<dbReference type="UniPathway" id="UPA00109">
    <property type="reaction ID" value="UER00189"/>
</dbReference>
<dbReference type="UniPathway" id="UPA00138"/>
<dbReference type="GO" id="GO:0005829">
    <property type="term" value="C:cytosol"/>
    <property type="evidence" value="ECO:0007669"/>
    <property type="project" value="TreeGrafter"/>
</dbReference>
<dbReference type="GO" id="GO:0004807">
    <property type="term" value="F:triose-phosphate isomerase activity"/>
    <property type="evidence" value="ECO:0007669"/>
    <property type="project" value="UniProtKB-UniRule"/>
</dbReference>
<dbReference type="GO" id="GO:0006094">
    <property type="term" value="P:gluconeogenesis"/>
    <property type="evidence" value="ECO:0007669"/>
    <property type="project" value="UniProtKB-UniRule"/>
</dbReference>
<dbReference type="GO" id="GO:0046166">
    <property type="term" value="P:glyceraldehyde-3-phosphate biosynthetic process"/>
    <property type="evidence" value="ECO:0007669"/>
    <property type="project" value="TreeGrafter"/>
</dbReference>
<dbReference type="GO" id="GO:0019563">
    <property type="term" value="P:glycerol catabolic process"/>
    <property type="evidence" value="ECO:0007669"/>
    <property type="project" value="TreeGrafter"/>
</dbReference>
<dbReference type="GO" id="GO:0006096">
    <property type="term" value="P:glycolytic process"/>
    <property type="evidence" value="ECO:0007669"/>
    <property type="project" value="UniProtKB-UniRule"/>
</dbReference>
<dbReference type="CDD" id="cd00311">
    <property type="entry name" value="TIM"/>
    <property type="match status" value="1"/>
</dbReference>
<dbReference type="FunFam" id="3.20.20.70:FF:000016">
    <property type="entry name" value="Triosephosphate isomerase"/>
    <property type="match status" value="1"/>
</dbReference>
<dbReference type="Gene3D" id="3.20.20.70">
    <property type="entry name" value="Aldolase class I"/>
    <property type="match status" value="1"/>
</dbReference>
<dbReference type="HAMAP" id="MF_00147_B">
    <property type="entry name" value="TIM_B"/>
    <property type="match status" value="1"/>
</dbReference>
<dbReference type="InterPro" id="IPR013785">
    <property type="entry name" value="Aldolase_TIM"/>
</dbReference>
<dbReference type="InterPro" id="IPR035990">
    <property type="entry name" value="TIM_sf"/>
</dbReference>
<dbReference type="InterPro" id="IPR022896">
    <property type="entry name" value="TrioseP_Isoase_bac/euk"/>
</dbReference>
<dbReference type="InterPro" id="IPR000652">
    <property type="entry name" value="Triosephosphate_isomerase"/>
</dbReference>
<dbReference type="InterPro" id="IPR020861">
    <property type="entry name" value="Triosephosphate_isomerase_AS"/>
</dbReference>
<dbReference type="NCBIfam" id="TIGR00419">
    <property type="entry name" value="tim"/>
    <property type="match status" value="1"/>
</dbReference>
<dbReference type="PANTHER" id="PTHR21139">
    <property type="entry name" value="TRIOSEPHOSPHATE ISOMERASE"/>
    <property type="match status" value="1"/>
</dbReference>
<dbReference type="PANTHER" id="PTHR21139:SF42">
    <property type="entry name" value="TRIOSEPHOSPHATE ISOMERASE"/>
    <property type="match status" value="1"/>
</dbReference>
<dbReference type="Pfam" id="PF00121">
    <property type="entry name" value="TIM"/>
    <property type="match status" value="1"/>
</dbReference>
<dbReference type="SUPFAM" id="SSF51351">
    <property type="entry name" value="Triosephosphate isomerase (TIM)"/>
    <property type="match status" value="1"/>
</dbReference>
<dbReference type="PROSITE" id="PS00171">
    <property type="entry name" value="TIM_1"/>
    <property type="match status" value="1"/>
</dbReference>
<dbReference type="PROSITE" id="PS51440">
    <property type="entry name" value="TIM_2"/>
    <property type="match status" value="1"/>
</dbReference>
<proteinExistence type="evidence at protein level"/>
<name>TPIS_STAAN</name>